<keyword id="KW-0030">Aminoacyl-tRNA synthetase</keyword>
<keyword id="KW-0067">ATP-binding</keyword>
<keyword id="KW-0963">Cytoplasm</keyword>
<keyword id="KW-0436">Ligase</keyword>
<keyword id="KW-0547">Nucleotide-binding</keyword>
<keyword id="KW-0648">Protein biosynthesis</keyword>
<keyword id="KW-1185">Reference proteome</keyword>
<feature type="chain" id="PRO_1000047426" description="Glycine--tRNA ligase alpha subunit">
    <location>
        <begin position="1"/>
        <end position="290"/>
    </location>
</feature>
<comment type="catalytic activity">
    <reaction evidence="1">
        <text>tRNA(Gly) + glycine + ATP = glycyl-tRNA(Gly) + AMP + diphosphate</text>
        <dbReference type="Rhea" id="RHEA:16013"/>
        <dbReference type="Rhea" id="RHEA-COMP:9664"/>
        <dbReference type="Rhea" id="RHEA-COMP:9683"/>
        <dbReference type="ChEBI" id="CHEBI:30616"/>
        <dbReference type="ChEBI" id="CHEBI:33019"/>
        <dbReference type="ChEBI" id="CHEBI:57305"/>
        <dbReference type="ChEBI" id="CHEBI:78442"/>
        <dbReference type="ChEBI" id="CHEBI:78522"/>
        <dbReference type="ChEBI" id="CHEBI:456215"/>
        <dbReference type="EC" id="6.1.1.14"/>
    </reaction>
</comment>
<comment type="subunit">
    <text evidence="1">Tetramer of two alpha and two beta subunits.</text>
</comment>
<comment type="subcellular location">
    <subcellularLocation>
        <location evidence="1">Cytoplasm</location>
    </subcellularLocation>
</comment>
<comment type="similarity">
    <text evidence="1">Belongs to the class-II aminoacyl-tRNA synthetase family.</text>
</comment>
<accession>Q7NKN1</accession>
<protein>
    <recommendedName>
        <fullName evidence="1">Glycine--tRNA ligase alpha subunit</fullName>
        <ecNumber evidence="1">6.1.1.14</ecNumber>
    </recommendedName>
    <alternativeName>
        <fullName evidence="1">Glycyl-tRNA synthetase alpha subunit</fullName>
        <shortName evidence="1">GlyRS</shortName>
    </alternativeName>
</protein>
<reference key="1">
    <citation type="journal article" date="2003" name="DNA Res.">
        <title>Complete genome structure of Gloeobacter violaceus PCC 7421, a cyanobacterium that lacks thylakoids.</title>
        <authorList>
            <person name="Nakamura Y."/>
            <person name="Kaneko T."/>
            <person name="Sato S."/>
            <person name="Mimuro M."/>
            <person name="Miyashita H."/>
            <person name="Tsuchiya T."/>
            <person name="Sasamoto S."/>
            <person name="Watanabe A."/>
            <person name="Kawashima K."/>
            <person name="Kishida Y."/>
            <person name="Kiyokawa C."/>
            <person name="Kohara M."/>
            <person name="Matsumoto M."/>
            <person name="Matsuno A."/>
            <person name="Nakazaki N."/>
            <person name="Shimpo S."/>
            <person name="Takeuchi C."/>
            <person name="Yamada M."/>
            <person name="Tabata S."/>
        </authorList>
    </citation>
    <scope>NUCLEOTIDE SEQUENCE [LARGE SCALE GENOMIC DNA]</scope>
    <source>
        <strain>ATCC 29082 / PCC 7421</strain>
    </source>
</reference>
<organism>
    <name type="scientific">Gloeobacter violaceus (strain ATCC 29082 / PCC 7421)</name>
    <dbReference type="NCBI Taxonomy" id="251221"/>
    <lineage>
        <taxon>Bacteria</taxon>
        <taxon>Bacillati</taxon>
        <taxon>Cyanobacteriota</taxon>
        <taxon>Cyanophyceae</taxon>
        <taxon>Gloeobacterales</taxon>
        <taxon>Gloeobacteraceae</taxon>
        <taxon>Gloeobacter</taxon>
    </lineage>
</organism>
<dbReference type="EC" id="6.1.1.14" evidence="1"/>
<dbReference type="EMBL" id="BA000045">
    <property type="protein sequence ID" value="BAC89387.1"/>
    <property type="molecule type" value="Genomic_DNA"/>
</dbReference>
<dbReference type="RefSeq" id="NP_924392.1">
    <property type="nucleotide sequence ID" value="NC_005125.1"/>
</dbReference>
<dbReference type="RefSeq" id="WP_011141446.1">
    <property type="nucleotide sequence ID" value="NC_005125.1"/>
</dbReference>
<dbReference type="SMR" id="Q7NKN1"/>
<dbReference type="STRING" id="251221.gene:10758930"/>
<dbReference type="EnsemblBacteria" id="BAC89387">
    <property type="protein sequence ID" value="BAC89387"/>
    <property type="gene ID" value="BAC89387"/>
</dbReference>
<dbReference type="KEGG" id="gvi:glr1446"/>
<dbReference type="PATRIC" id="fig|251221.4.peg.1478"/>
<dbReference type="eggNOG" id="COG0752">
    <property type="taxonomic scope" value="Bacteria"/>
</dbReference>
<dbReference type="HOGENOM" id="CLU_057066_1_0_3"/>
<dbReference type="InParanoid" id="Q7NKN1"/>
<dbReference type="OrthoDB" id="9802183at2"/>
<dbReference type="PhylomeDB" id="Q7NKN1"/>
<dbReference type="Proteomes" id="UP000000557">
    <property type="component" value="Chromosome"/>
</dbReference>
<dbReference type="GO" id="GO:0005737">
    <property type="term" value="C:cytoplasm"/>
    <property type="evidence" value="ECO:0007669"/>
    <property type="project" value="UniProtKB-SubCell"/>
</dbReference>
<dbReference type="GO" id="GO:0005524">
    <property type="term" value="F:ATP binding"/>
    <property type="evidence" value="ECO:0007669"/>
    <property type="project" value="UniProtKB-UniRule"/>
</dbReference>
<dbReference type="GO" id="GO:0004820">
    <property type="term" value="F:glycine-tRNA ligase activity"/>
    <property type="evidence" value="ECO:0007669"/>
    <property type="project" value="UniProtKB-UniRule"/>
</dbReference>
<dbReference type="GO" id="GO:0006426">
    <property type="term" value="P:glycyl-tRNA aminoacylation"/>
    <property type="evidence" value="ECO:0007669"/>
    <property type="project" value="UniProtKB-UniRule"/>
</dbReference>
<dbReference type="CDD" id="cd00733">
    <property type="entry name" value="GlyRS_alpha_core"/>
    <property type="match status" value="1"/>
</dbReference>
<dbReference type="FunFam" id="3.30.930.10:FF:000006">
    <property type="entry name" value="Glycine--tRNA ligase alpha subunit"/>
    <property type="match status" value="1"/>
</dbReference>
<dbReference type="Gene3D" id="3.30.930.10">
    <property type="entry name" value="Bira Bifunctional Protein, Domain 2"/>
    <property type="match status" value="1"/>
</dbReference>
<dbReference type="Gene3D" id="1.20.58.180">
    <property type="entry name" value="Class II aaRS and biotin synthetases, domain 2"/>
    <property type="match status" value="1"/>
</dbReference>
<dbReference type="HAMAP" id="MF_00254">
    <property type="entry name" value="Gly_tRNA_synth_alpha"/>
    <property type="match status" value="1"/>
</dbReference>
<dbReference type="InterPro" id="IPR045864">
    <property type="entry name" value="aa-tRNA-synth_II/BPL/LPL"/>
</dbReference>
<dbReference type="InterPro" id="IPR006194">
    <property type="entry name" value="Gly-tRNA-synth_heterodimer"/>
</dbReference>
<dbReference type="InterPro" id="IPR002310">
    <property type="entry name" value="Gly-tRNA_ligase_asu"/>
</dbReference>
<dbReference type="NCBIfam" id="TIGR00388">
    <property type="entry name" value="glyQ"/>
    <property type="match status" value="1"/>
</dbReference>
<dbReference type="NCBIfam" id="NF006827">
    <property type="entry name" value="PRK09348.1"/>
    <property type="match status" value="1"/>
</dbReference>
<dbReference type="PANTHER" id="PTHR30075:SF2">
    <property type="entry name" value="GLYCINE--TRNA LIGASE, CHLOROPLASTIC_MITOCHONDRIAL 2"/>
    <property type="match status" value="1"/>
</dbReference>
<dbReference type="PANTHER" id="PTHR30075">
    <property type="entry name" value="GLYCYL-TRNA SYNTHETASE"/>
    <property type="match status" value="1"/>
</dbReference>
<dbReference type="Pfam" id="PF02091">
    <property type="entry name" value="tRNA-synt_2e"/>
    <property type="match status" value="1"/>
</dbReference>
<dbReference type="PRINTS" id="PR01044">
    <property type="entry name" value="TRNASYNTHGA"/>
</dbReference>
<dbReference type="SUPFAM" id="SSF55681">
    <property type="entry name" value="Class II aaRS and biotin synthetases"/>
    <property type="match status" value="1"/>
</dbReference>
<dbReference type="PROSITE" id="PS50861">
    <property type="entry name" value="AA_TRNA_LIGASE_II_GLYAB"/>
    <property type="match status" value="1"/>
</dbReference>
<evidence type="ECO:0000255" key="1">
    <source>
        <dbReference type="HAMAP-Rule" id="MF_00254"/>
    </source>
</evidence>
<sequence>MNFQDMTLSLHRFWEEQGCLIVQPYDVEKGAGTMNPHTFLRAIGPEPWNVAYIEPCRRPTDGRYAQNPNRLQHYYQYQVLMKPSPGDIQERYLRSLEVLGIHPEKHDVRFVEDNWESPTLGAWGVGWEVWLDGMEVTQFTYFQQCGGIDCRPVSIEITYGIERLAMYLQGVDSIFDIEWGAGLTYGQVHREGEIENCIYNFEQANPELLFTLFKLYEQEATALSERRLVLPALDYVLKCSHTFNLLDARGVIAVTERTGYIGRIRHLARRIAQAYAKQRESLGFPLLSKT</sequence>
<proteinExistence type="inferred from homology"/>
<name>SYGA_GLOVI</name>
<gene>
    <name evidence="1" type="primary">glyQ</name>
    <name type="ordered locus">glr1446</name>
</gene>